<sequence>MSTANNNSESTESVSMNAFKQPKAFYLIFSIELWERFGYYGLQGIMAVYLVKMLGMSETDSITLFSSFSALVYGFVAIGGWLGDKVLGTKRVIVLGAIVLAIGYTMIAYSGHSVAWVYIGMATIAVGNGLFKANPSALLSTCYAKDDPRLDGAFTMYYMAVNIGSFFSMLATPVLAANYGWSVAFSLSVVGMILTLVNFMFCRKWVSTQGSQPDFQPINLKKLVITLAGIVVLVALSTWLLHNQGVARWILTIISLAVVAIFIKEMLAVSGAERRKMIVALLLMLEAVVFFVLYNQMPTSLNFFAIRNVEHSILGFAFEPEQYQALNPFWIMVASPLLAAVYNKMGDQLPMAHKFAIGMVLCSGAFLVLPWGASMANEQGIVSVNWLILCYGLQSIGELMISGLGLAMVAQLVPQRLMGFIMGAWFLTSAGAAIIAGYVANMMAVPENVVDPHVSLEVYSNVFMQIGIVTGIIAVLMMLTAPKLTRMTQDVATDVPADAATTTASA</sequence>
<proteinExistence type="inferred from homology"/>
<gene>
    <name evidence="1" type="primary">dtpA</name>
    <name type="ordered locus">PC1_2017</name>
</gene>
<dbReference type="EMBL" id="CP001657">
    <property type="protein sequence ID" value="ACT13058.1"/>
    <property type="molecule type" value="Genomic_DNA"/>
</dbReference>
<dbReference type="RefSeq" id="WP_015840251.1">
    <property type="nucleotide sequence ID" value="NC_012917.1"/>
</dbReference>
<dbReference type="SMR" id="C6DH09"/>
<dbReference type="KEGG" id="pct:PC1_2017"/>
<dbReference type="eggNOG" id="COG3104">
    <property type="taxonomic scope" value="Bacteria"/>
</dbReference>
<dbReference type="HOGENOM" id="CLU_004790_0_0_6"/>
<dbReference type="OrthoDB" id="9772725at2"/>
<dbReference type="Proteomes" id="UP000002736">
    <property type="component" value="Chromosome"/>
</dbReference>
<dbReference type="GO" id="GO:0005886">
    <property type="term" value="C:plasma membrane"/>
    <property type="evidence" value="ECO:0007669"/>
    <property type="project" value="UniProtKB-SubCell"/>
</dbReference>
<dbReference type="GO" id="GO:0071916">
    <property type="term" value="F:dipeptide transmembrane transporter activity"/>
    <property type="evidence" value="ECO:0007669"/>
    <property type="project" value="UniProtKB-UniRule"/>
</dbReference>
<dbReference type="GO" id="GO:0015333">
    <property type="term" value="F:peptide:proton symporter activity"/>
    <property type="evidence" value="ECO:0007669"/>
    <property type="project" value="UniProtKB-UniRule"/>
</dbReference>
<dbReference type="GO" id="GO:0042937">
    <property type="term" value="F:tripeptide transmembrane transporter activity"/>
    <property type="evidence" value="ECO:0007669"/>
    <property type="project" value="UniProtKB-UniRule"/>
</dbReference>
<dbReference type="GO" id="GO:0015031">
    <property type="term" value="P:protein transport"/>
    <property type="evidence" value="ECO:0007669"/>
    <property type="project" value="UniProtKB-KW"/>
</dbReference>
<dbReference type="CDD" id="cd17346">
    <property type="entry name" value="MFS_DtpA_like"/>
    <property type="match status" value="1"/>
</dbReference>
<dbReference type="FunFam" id="1.20.1250.20:FF:000017">
    <property type="entry name" value="Dipeptide and tripeptide permease A"/>
    <property type="match status" value="1"/>
</dbReference>
<dbReference type="Gene3D" id="1.20.1250.20">
    <property type="entry name" value="MFS general substrate transporter like domains"/>
    <property type="match status" value="1"/>
</dbReference>
<dbReference type="HAMAP" id="MF_01878">
    <property type="entry name" value="PTR2_DtpA_subfam"/>
    <property type="match status" value="1"/>
</dbReference>
<dbReference type="InterPro" id="IPR023517">
    <property type="entry name" value="AA/pep_transptr_DtpA"/>
</dbReference>
<dbReference type="InterPro" id="IPR005279">
    <property type="entry name" value="Dipep/tripep_permease"/>
</dbReference>
<dbReference type="InterPro" id="IPR036259">
    <property type="entry name" value="MFS_trans_sf"/>
</dbReference>
<dbReference type="InterPro" id="IPR050171">
    <property type="entry name" value="MFS_Transporters"/>
</dbReference>
<dbReference type="InterPro" id="IPR000109">
    <property type="entry name" value="POT_fam"/>
</dbReference>
<dbReference type="InterPro" id="IPR018456">
    <property type="entry name" value="PTR2_symporter_CS"/>
</dbReference>
<dbReference type="NCBIfam" id="NF007137">
    <property type="entry name" value="PRK09584.1"/>
    <property type="match status" value="1"/>
</dbReference>
<dbReference type="NCBIfam" id="TIGR00924">
    <property type="entry name" value="yjdL_sub1_fam"/>
    <property type="match status" value="1"/>
</dbReference>
<dbReference type="PANTHER" id="PTHR23517:SF15">
    <property type="entry name" value="PROTON-DEPENDENT OLIGOPEPTIDE FAMILY TRANSPORT PROTEIN"/>
    <property type="match status" value="1"/>
</dbReference>
<dbReference type="PANTHER" id="PTHR23517">
    <property type="entry name" value="RESISTANCE PROTEIN MDTM, PUTATIVE-RELATED-RELATED"/>
    <property type="match status" value="1"/>
</dbReference>
<dbReference type="Pfam" id="PF00854">
    <property type="entry name" value="PTR2"/>
    <property type="match status" value="1"/>
</dbReference>
<dbReference type="SUPFAM" id="SSF103473">
    <property type="entry name" value="MFS general substrate transporter"/>
    <property type="match status" value="1"/>
</dbReference>
<dbReference type="PROSITE" id="PS01022">
    <property type="entry name" value="PTR2_1"/>
    <property type="match status" value="1"/>
</dbReference>
<dbReference type="PROSITE" id="PS01023">
    <property type="entry name" value="PTR2_2"/>
    <property type="match status" value="1"/>
</dbReference>
<reference key="1">
    <citation type="submission" date="2009-07" db="EMBL/GenBank/DDBJ databases">
        <title>Complete sequence of Pectobacterium carotovorum subsp. carotovorum PC1.</title>
        <authorList>
            <consortium name="US DOE Joint Genome Institute"/>
            <person name="Lucas S."/>
            <person name="Copeland A."/>
            <person name="Lapidus A."/>
            <person name="Glavina del Rio T."/>
            <person name="Tice H."/>
            <person name="Bruce D."/>
            <person name="Goodwin L."/>
            <person name="Pitluck S."/>
            <person name="Munk A.C."/>
            <person name="Brettin T."/>
            <person name="Detter J.C."/>
            <person name="Han C."/>
            <person name="Tapia R."/>
            <person name="Larimer F."/>
            <person name="Land M."/>
            <person name="Hauser L."/>
            <person name="Kyrpides N."/>
            <person name="Mikhailova N."/>
            <person name="Balakrishnan V."/>
            <person name="Glasner J."/>
            <person name="Perna N.T."/>
        </authorList>
    </citation>
    <scope>NUCLEOTIDE SEQUENCE [LARGE SCALE GENOMIC DNA]</scope>
    <source>
        <strain>PC1</strain>
    </source>
</reference>
<name>DTPA_PECCP</name>
<comment type="function">
    <text evidence="1">Proton-dependent permease that transports di- and tripeptides.</text>
</comment>
<comment type="subcellular location">
    <subcellularLocation>
        <location evidence="1">Cell inner membrane</location>
        <topology evidence="1">Multi-pass membrane protein</topology>
    </subcellularLocation>
</comment>
<comment type="similarity">
    <text evidence="1">Belongs to the major facilitator superfamily. Proton-dependent oligopeptide transporter (POT/PTR) (TC 2.A.17) family. DtpA subfamily.</text>
</comment>
<evidence type="ECO:0000255" key="1">
    <source>
        <dbReference type="HAMAP-Rule" id="MF_01878"/>
    </source>
</evidence>
<organism>
    <name type="scientific">Pectobacterium carotovorum subsp. carotovorum (strain PC1)</name>
    <dbReference type="NCBI Taxonomy" id="561230"/>
    <lineage>
        <taxon>Bacteria</taxon>
        <taxon>Pseudomonadati</taxon>
        <taxon>Pseudomonadota</taxon>
        <taxon>Gammaproteobacteria</taxon>
        <taxon>Enterobacterales</taxon>
        <taxon>Pectobacteriaceae</taxon>
        <taxon>Pectobacterium</taxon>
    </lineage>
</organism>
<keyword id="KW-0997">Cell inner membrane</keyword>
<keyword id="KW-1003">Cell membrane</keyword>
<keyword id="KW-0472">Membrane</keyword>
<keyword id="KW-0571">Peptide transport</keyword>
<keyword id="KW-0653">Protein transport</keyword>
<keyword id="KW-0812">Transmembrane</keyword>
<keyword id="KW-1133">Transmembrane helix</keyword>
<keyword id="KW-0813">Transport</keyword>
<accession>C6DH09</accession>
<feature type="chain" id="PRO_0000395179" description="Dipeptide and tripeptide permease A">
    <location>
        <begin position="1"/>
        <end position="506"/>
    </location>
</feature>
<feature type="topological domain" description="Cytoplasmic" evidence="1">
    <location>
        <begin position="1"/>
        <end position="36"/>
    </location>
</feature>
<feature type="transmembrane region" description="Helical" evidence="1">
    <location>
        <begin position="37"/>
        <end position="57"/>
    </location>
</feature>
<feature type="topological domain" description="Periplasmic" evidence="1">
    <location>
        <begin position="58"/>
        <end position="61"/>
    </location>
</feature>
<feature type="transmembrane region" description="Helical" evidence="1">
    <location>
        <begin position="62"/>
        <end position="82"/>
    </location>
</feature>
<feature type="topological domain" description="Cytoplasmic" evidence="1">
    <location>
        <begin position="83"/>
        <end position="91"/>
    </location>
</feature>
<feature type="transmembrane region" description="Helical" evidence="1">
    <location>
        <begin position="92"/>
        <end position="112"/>
    </location>
</feature>
<feature type="transmembrane region" description="Helical" evidence="1">
    <location>
        <begin position="113"/>
        <end position="133"/>
    </location>
</feature>
<feature type="topological domain" description="Cytoplasmic" evidence="1">
    <location>
        <begin position="134"/>
        <end position="155"/>
    </location>
</feature>
<feature type="transmembrane region" description="Helical" evidence="1">
    <location>
        <begin position="156"/>
        <end position="176"/>
    </location>
</feature>
<feature type="topological domain" description="Periplasmic" evidence="1">
    <location>
        <begin position="177"/>
        <end position="180"/>
    </location>
</feature>
<feature type="transmembrane region" description="Helical" evidence="1">
    <location>
        <begin position="181"/>
        <end position="201"/>
    </location>
</feature>
<feature type="topological domain" description="Cytoplasmic" evidence="1">
    <location>
        <begin position="202"/>
        <end position="222"/>
    </location>
</feature>
<feature type="transmembrane region" description="Helical" evidence="1">
    <location>
        <begin position="223"/>
        <end position="243"/>
    </location>
</feature>
<feature type="topological domain" description="Periplasmic" evidence="1">
    <location>
        <begin position="244"/>
        <end position="248"/>
    </location>
</feature>
<feature type="transmembrane region" description="Helical" evidence="1">
    <location>
        <begin position="249"/>
        <end position="269"/>
    </location>
</feature>
<feature type="topological domain" description="Cytoplasmic" evidence="1">
    <location>
        <begin position="270"/>
        <end position="276"/>
    </location>
</feature>
<feature type="transmembrane region" description="Helical" evidence="1">
    <location>
        <begin position="277"/>
        <end position="297"/>
    </location>
</feature>
<feature type="topological domain" description="Periplasmic" evidence="1">
    <location>
        <begin position="298"/>
        <end position="322"/>
    </location>
</feature>
<feature type="transmembrane region" description="Helical" evidence="1">
    <location>
        <begin position="323"/>
        <end position="343"/>
    </location>
</feature>
<feature type="topological domain" description="Cytoplasmic" evidence="1">
    <location>
        <begin position="344"/>
        <end position="354"/>
    </location>
</feature>
<feature type="transmembrane region" description="Helical" evidence="1">
    <location>
        <begin position="355"/>
        <end position="375"/>
    </location>
</feature>
<feature type="topological domain" description="Periplasmic" evidence="1">
    <location>
        <begin position="376"/>
        <end position="385"/>
    </location>
</feature>
<feature type="transmembrane region" description="Helical" evidence="1">
    <location>
        <begin position="386"/>
        <end position="406"/>
    </location>
</feature>
<feature type="topological domain" description="Cytoplasmic" evidence="1">
    <location>
        <begin position="407"/>
        <end position="416"/>
    </location>
</feature>
<feature type="transmembrane region" description="Helical" evidence="1">
    <location>
        <begin position="417"/>
        <end position="437"/>
    </location>
</feature>
<feature type="topological domain" description="Periplasmic" evidence="1">
    <location>
        <begin position="438"/>
        <end position="461"/>
    </location>
</feature>
<feature type="transmembrane region" description="Helical" evidence="1">
    <location>
        <begin position="462"/>
        <end position="482"/>
    </location>
</feature>
<feature type="topological domain" description="Cytoplasmic" evidence="1">
    <location>
        <begin position="483"/>
        <end position="506"/>
    </location>
</feature>
<protein>
    <recommendedName>
        <fullName evidence="1">Dipeptide and tripeptide permease A</fullName>
    </recommendedName>
</protein>